<accession>C3KDX1</accession>
<feature type="chain" id="PRO_1000206507" description="Small ribosomal subunit protein bS20">
    <location>
        <begin position="1"/>
        <end position="92"/>
    </location>
</feature>
<feature type="region of interest" description="Disordered" evidence="2">
    <location>
        <begin position="1"/>
        <end position="23"/>
    </location>
</feature>
<feature type="compositionally biased region" description="Basic residues" evidence="2">
    <location>
        <begin position="7"/>
        <end position="20"/>
    </location>
</feature>
<name>RS20_PSEFS</name>
<organism>
    <name type="scientific">Pseudomonas fluorescens (strain SBW25)</name>
    <dbReference type="NCBI Taxonomy" id="216595"/>
    <lineage>
        <taxon>Bacteria</taxon>
        <taxon>Pseudomonadati</taxon>
        <taxon>Pseudomonadota</taxon>
        <taxon>Gammaproteobacteria</taxon>
        <taxon>Pseudomonadales</taxon>
        <taxon>Pseudomonadaceae</taxon>
        <taxon>Pseudomonas</taxon>
    </lineage>
</organism>
<dbReference type="EMBL" id="AM181176">
    <property type="protein sequence ID" value="CAY47034.1"/>
    <property type="molecule type" value="Genomic_DNA"/>
</dbReference>
<dbReference type="RefSeq" id="WP_003188401.1">
    <property type="nucleotide sequence ID" value="NC_012660.1"/>
</dbReference>
<dbReference type="SMR" id="C3KDX1"/>
<dbReference type="STRING" id="294.SRM1_04905"/>
<dbReference type="GeneID" id="93498638"/>
<dbReference type="eggNOG" id="COG0268">
    <property type="taxonomic scope" value="Bacteria"/>
</dbReference>
<dbReference type="HOGENOM" id="CLU_160655_4_0_6"/>
<dbReference type="OrthoDB" id="9807974at2"/>
<dbReference type="GO" id="GO:0005829">
    <property type="term" value="C:cytosol"/>
    <property type="evidence" value="ECO:0007669"/>
    <property type="project" value="TreeGrafter"/>
</dbReference>
<dbReference type="GO" id="GO:0015935">
    <property type="term" value="C:small ribosomal subunit"/>
    <property type="evidence" value="ECO:0007669"/>
    <property type="project" value="TreeGrafter"/>
</dbReference>
<dbReference type="GO" id="GO:0070181">
    <property type="term" value="F:small ribosomal subunit rRNA binding"/>
    <property type="evidence" value="ECO:0007669"/>
    <property type="project" value="TreeGrafter"/>
</dbReference>
<dbReference type="GO" id="GO:0003735">
    <property type="term" value="F:structural constituent of ribosome"/>
    <property type="evidence" value="ECO:0007669"/>
    <property type="project" value="InterPro"/>
</dbReference>
<dbReference type="GO" id="GO:0006412">
    <property type="term" value="P:translation"/>
    <property type="evidence" value="ECO:0007669"/>
    <property type="project" value="UniProtKB-UniRule"/>
</dbReference>
<dbReference type="FunFam" id="1.20.58.110:FF:000001">
    <property type="entry name" value="30S ribosomal protein S20"/>
    <property type="match status" value="1"/>
</dbReference>
<dbReference type="Gene3D" id="1.20.58.110">
    <property type="entry name" value="Ribosomal protein S20"/>
    <property type="match status" value="1"/>
</dbReference>
<dbReference type="HAMAP" id="MF_00500">
    <property type="entry name" value="Ribosomal_bS20"/>
    <property type="match status" value="1"/>
</dbReference>
<dbReference type="InterPro" id="IPR002583">
    <property type="entry name" value="Ribosomal_bS20"/>
</dbReference>
<dbReference type="InterPro" id="IPR036510">
    <property type="entry name" value="Ribosomal_bS20_sf"/>
</dbReference>
<dbReference type="NCBIfam" id="TIGR00029">
    <property type="entry name" value="S20"/>
    <property type="match status" value="1"/>
</dbReference>
<dbReference type="PANTHER" id="PTHR33398">
    <property type="entry name" value="30S RIBOSOMAL PROTEIN S20"/>
    <property type="match status" value="1"/>
</dbReference>
<dbReference type="PANTHER" id="PTHR33398:SF1">
    <property type="entry name" value="SMALL RIBOSOMAL SUBUNIT PROTEIN BS20C"/>
    <property type="match status" value="1"/>
</dbReference>
<dbReference type="Pfam" id="PF01649">
    <property type="entry name" value="Ribosomal_S20p"/>
    <property type="match status" value="1"/>
</dbReference>
<dbReference type="SUPFAM" id="SSF46992">
    <property type="entry name" value="Ribosomal protein S20"/>
    <property type="match status" value="1"/>
</dbReference>
<gene>
    <name evidence="1" type="primary">rpsT</name>
    <name type="ordered locus">PFLU_0765</name>
</gene>
<proteinExistence type="inferred from homology"/>
<evidence type="ECO:0000255" key="1">
    <source>
        <dbReference type="HAMAP-Rule" id="MF_00500"/>
    </source>
</evidence>
<evidence type="ECO:0000256" key="2">
    <source>
        <dbReference type="SAM" id="MobiDB-lite"/>
    </source>
</evidence>
<evidence type="ECO:0000305" key="3"/>
<reference key="1">
    <citation type="journal article" date="2009" name="Genome Biol.">
        <title>Genomic and genetic analyses of diversity and plant interactions of Pseudomonas fluorescens.</title>
        <authorList>
            <person name="Silby M.W."/>
            <person name="Cerdeno-Tarraga A.M."/>
            <person name="Vernikos G.S."/>
            <person name="Giddens S.R."/>
            <person name="Jackson R.W."/>
            <person name="Preston G.M."/>
            <person name="Zhang X.-X."/>
            <person name="Moon C.D."/>
            <person name="Gehrig S.M."/>
            <person name="Godfrey S.A.C."/>
            <person name="Knight C.G."/>
            <person name="Malone J.G."/>
            <person name="Robinson Z."/>
            <person name="Spiers A.J."/>
            <person name="Harris S."/>
            <person name="Challis G.L."/>
            <person name="Yaxley A.M."/>
            <person name="Harris D."/>
            <person name="Seeger K."/>
            <person name="Murphy L."/>
            <person name="Rutter S."/>
            <person name="Squares R."/>
            <person name="Quail M.A."/>
            <person name="Saunders E."/>
            <person name="Mavromatis K."/>
            <person name="Brettin T.S."/>
            <person name="Bentley S.D."/>
            <person name="Hothersall J."/>
            <person name="Stephens E."/>
            <person name="Thomas C.M."/>
            <person name="Parkhill J."/>
            <person name="Levy S.B."/>
            <person name="Rainey P.B."/>
            <person name="Thomson N.R."/>
        </authorList>
    </citation>
    <scope>NUCLEOTIDE SEQUENCE [LARGE SCALE GENOMIC DNA]</scope>
    <source>
        <strain>SBW25</strain>
    </source>
</reference>
<sequence length="92" mass="10084">MANTPSAKKRAKQAEKRRSHNASLRSMVRTYIKNVVKAIDTKDAEKAQAAYVLAVPVIDRMADKGIIHKNKAARHKSRLNGHIKALSVPAAA</sequence>
<protein>
    <recommendedName>
        <fullName evidence="1">Small ribosomal subunit protein bS20</fullName>
    </recommendedName>
    <alternativeName>
        <fullName evidence="3">30S ribosomal protein S20</fullName>
    </alternativeName>
</protein>
<comment type="function">
    <text evidence="1">Binds directly to 16S ribosomal RNA.</text>
</comment>
<comment type="similarity">
    <text evidence="1">Belongs to the bacterial ribosomal protein bS20 family.</text>
</comment>
<keyword id="KW-0687">Ribonucleoprotein</keyword>
<keyword id="KW-0689">Ribosomal protein</keyword>
<keyword id="KW-0694">RNA-binding</keyword>
<keyword id="KW-0699">rRNA-binding</keyword>